<keyword id="KW-0067">ATP-binding</keyword>
<keyword id="KW-0436">Ligase</keyword>
<keyword id="KW-0479">Metal-binding</keyword>
<keyword id="KW-0547">Nucleotide-binding</keyword>
<keyword id="KW-1185">Reference proteome</keyword>
<keyword id="KW-0862">Zinc</keyword>
<name>MSHC_COREF</name>
<proteinExistence type="inferred from homology"/>
<evidence type="ECO:0000250" key="1"/>
<evidence type="ECO:0000305" key="2"/>
<reference key="1">
    <citation type="journal article" date="2003" name="Genome Res.">
        <title>Comparative complete genome sequence analysis of the amino acid replacements responsible for the thermostability of Corynebacterium efficiens.</title>
        <authorList>
            <person name="Nishio Y."/>
            <person name="Nakamura Y."/>
            <person name="Kawarabayasi Y."/>
            <person name="Usuda Y."/>
            <person name="Kimura E."/>
            <person name="Sugimoto S."/>
            <person name="Matsui K."/>
            <person name="Yamagishi A."/>
            <person name="Kikuchi H."/>
            <person name="Ikeo K."/>
            <person name="Gojobori T."/>
        </authorList>
    </citation>
    <scope>NUCLEOTIDE SEQUENCE [LARGE SCALE GENOMIC DNA]</scope>
    <source>
        <strain>DSM 44549 / YS-314 / AJ 12310 / JCM 11189 / NBRC 100395</strain>
    </source>
</reference>
<accession>Q8FTD0</accession>
<sequence length="430" mass="46764">MHSWPTPDIPALDGTPVPLALYDTADQQVKPVEVPPSGSGTPVGMYVCGITPYDSTHLGHAATYLAFDLIYRVLLDNDHQVHYVQNITDVDDPLFERAERDGVDWRELGTSQIDLFRKDMETLAVIPPKDYIGAIESIDEVIEMVSTLLEEGAAYVVDDPEYPDVYASINATENFGYESNYDAATMAELFAERGGDPDRPGKRNPMDALLWRAAREGEPSWESPFGPGRPGWHIECSAIATNRLGHSFDIQGGGSDLMFPHHEFSAAHAEAAHGVERMAKHYVHAGMISQDGVKMSKSLGNLEFVHRLTAAGHEPGAIRLGVYAHHYRGDRDWSDEILAAAEARLALWRSAITVATDVQAAVDAVAQLRTHLSNDLDTPAALAAVDAWAEAALKDTGNVSDTADQFDTPEFTPAGRILAAAVDALLGVRL</sequence>
<dbReference type="EC" id="6.3.1.13"/>
<dbReference type="EMBL" id="BA000035">
    <property type="protein sequence ID" value="BAC18449.1"/>
    <property type="molecule type" value="Genomic_DNA"/>
</dbReference>
<dbReference type="RefSeq" id="WP_006767639.1">
    <property type="nucleotide sequence ID" value="NC_004369.1"/>
</dbReference>
<dbReference type="SMR" id="Q8FTD0"/>
<dbReference type="STRING" id="196164.gene:10742058"/>
<dbReference type="KEGG" id="cef:CE1639"/>
<dbReference type="eggNOG" id="COG0215">
    <property type="taxonomic scope" value="Bacteria"/>
</dbReference>
<dbReference type="HOGENOM" id="CLU_013528_0_0_11"/>
<dbReference type="OrthoDB" id="9815130at2"/>
<dbReference type="Proteomes" id="UP000001409">
    <property type="component" value="Chromosome"/>
</dbReference>
<dbReference type="GO" id="GO:0005829">
    <property type="term" value="C:cytosol"/>
    <property type="evidence" value="ECO:0007669"/>
    <property type="project" value="TreeGrafter"/>
</dbReference>
<dbReference type="GO" id="GO:0005524">
    <property type="term" value="F:ATP binding"/>
    <property type="evidence" value="ECO:0007669"/>
    <property type="project" value="UniProtKB-KW"/>
</dbReference>
<dbReference type="GO" id="GO:0035446">
    <property type="term" value="F:cysteine-glucosaminylinositol ligase activity"/>
    <property type="evidence" value="ECO:0007669"/>
    <property type="project" value="UniProtKB-UniRule"/>
</dbReference>
<dbReference type="GO" id="GO:0004817">
    <property type="term" value="F:cysteine-tRNA ligase activity"/>
    <property type="evidence" value="ECO:0007669"/>
    <property type="project" value="TreeGrafter"/>
</dbReference>
<dbReference type="GO" id="GO:0008270">
    <property type="term" value="F:zinc ion binding"/>
    <property type="evidence" value="ECO:0007669"/>
    <property type="project" value="UniProtKB-UniRule"/>
</dbReference>
<dbReference type="GO" id="GO:0006423">
    <property type="term" value="P:cysteinyl-tRNA aminoacylation"/>
    <property type="evidence" value="ECO:0007669"/>
    <property type="project" value="TreeGrafter"/>
</dbReference>
<dbReference type="GO" id="GO:0010125">
    <property type="term" value="P:mycothiol biosynthetic process"/>
    <property type="evidence" value="ECO:0007669"/>
    <property type="project" value="UniProtKB-UniRule"/>
</dbReference>
<dbReference type="Gene3D" id="1.20.120.640">
    <property type="entry name" value="Anticodon-binding domain of a subclass of class I aminoacyl-tRNA synthetases"/>
    <property type="match status" value="1"/>
</dbReference>
<dbReference type="Gene3D" id="3.40.50.620">
    <property type="entry name" value="HUPs"/>
    <property type="match status" value="1"/>
</dbReference>
<dbReference type="HAMAP" id="MF_01697">
    <property type="entry name" value="MshC"/>
    <property type="match status" value="1"/>
</dbReference>
<dbReference type="InterPro" id="IPR024909">
    <property type="entry name" value="Cys-tRNA/MSH_ligase"/>
</dbReference>
<dbReference type="InterPro" id="IPR017812">
    <property type="entry name" value="Mycothiol_ligase_MshC"/>
</dbReference>
<dbReference type="InterPro" id="IPR014729">
    <property type="entry name" value="Rossmann-like_a/b/a_fold"/>
</dbReference>
<dbReference type="InterPro" id="IPR032678">
    <property type="entry name" value="tRNA-synt_1_cat_dom"/>
</dbReference>
<dbReference type="NCBIfam" id="TIGR03447">
    <property type="entry name" value="mycothiol_MshC"/>
    <property type="match status" value="1"/>
</dbReference>
<dbReference type="PANTHER" id="PTHR10890:SF3">
    <property type="entry name" value="CYSTEINE--TRNA LIGASE, CYTOPLASMIC"/>
    <property type="match status" value="1"/>
</dbReference>
<dbReference type="PANTHER" id="PTHR10890">
    <property type="entry name" value="CYSTEINYL-TRNA SYNTHETASE"/>
    <property type="match status" value="1"/>
</dbReference>
<dbReference type="Pfam" id="PF01406">
    <property type="entry name" value="tRNA-synt_1e"/>
    <property type="match status" value="1"/>
</dbReference>
<dbReference type="PRINTS" id="PR00983">
    <property type="entry name" value="TRNASYNTHCYS"/>
</dbReference>
<dbReference type="SUPFAM" id="SSF52374">
    <property type="entry name" value="Nucleotidylyl transferase"/>
    <property type="match status" value="1"/>
</dbReference>
<gene>
    <name type="primary">mshC</name>
    <name type="synonym">cysS2</name>
    <name type="ordered locus">CE1639</name>
</gene>
<comment type="function">
    <text evidence="1">Catalyzes the ATP-dependent condensation of GlcN-Ins and L-cysteine to form L-Cys-GlcN-Ins.</text>
</comment>
<comment type="catalytic activity">
    <reaction>
        <text>1D-myo-inositol 2-amino-2-deoxy-alpha-D-glucopyranoside + L-cysteine + ATP = 1D-myo-inositol 2-(L-cysteinylamino)-2-deoxy-alpha-D-glucopyranoside + AMP + diphosphate + H(+)</text>
        <dbReference type="Rhea" id="RHEA:26176"/>
        <dbReference type="ChEBI" id="CHEBI:15378"/>
        <dbReference type="ChEBI" id="CHEBI:30616"/>
        <dbReference type="ChEBI" id="CHEBI:33019"/>
        <dbReference type="ChEBI" id="CHEBI:35235"/>
        <dbReference type="ChEBI" id="CHEBI:58886"/>
        <dbReference type="ChEBI" id="CHEBI:58887"/>
        <dbReference type="ChEBI" id="CHEBI:456215"/>
        <dbReference type="EC" id="6.3.1.13"/>
    </reaction>
</comment>
<comment type="cofactor">
    <cofactor evidence="1">
        <name>Zn(2+)</name>
        <dbReference type="ChEBI" id="CHEBI:29105"/>
    </cofactor>
    <text evidence="1">Binds 1 zinc ion per subunit.</text>
</comment>
<comment type="subunit">
    <text evidence="1">Monomer.</text>
</comment>
<comment type="similarity">
    <text evidence="2">Belongs to the class-I aminoacyl-tRNA synthetase family. MshC subfamily.</text>
</comment>
<organism>
    <name type="scientific">Corynebacterium efficiens (strain DSM 44549 / YS-314 / AJ 12310 / JCM 11189 / NBRC 100395)</name>
    <dbReference type="NCBI Taxonomy" id="196164"/>
    <lineage>
        <taxon>Bacteria</taxon>
        <taxon>Bacillati</taxon>
        <taxon>Actinomycetota</taxon>
        <taxon>Actinomycetes</taxon>
        <taxon>Mycobacteriales</taxon>
        <taxon>Corynebacteriaceae</taxon>
        <taxon>Corynebacterium</taxon>
    </lineage>
</organism>
<protein>
    <recommendedName>
        <fullName>L-cysteine:1D-myo-inositol 2-amino-2-deoxy-alpha-D-glucopyranoside ligase</fullName>
        <shortName>L-Cys:GlcN-Ins ligase</shortName>
        <ecNumber>6.3.1.13</ecNumber>
    </recommendedName>
    <alternativeName>
        <fullName>Mycothiol ligase</fullName>
        <shortName>MSH ligase</shortName>
    </alternativeName>
</protein>
<feature type="chain" id="PRO_0000159387" description="L-cysteine:1D-myo-inositol 2-amino-2-deoxy-alpha-D-glucopyranoside ligase">
    <location>
        <begin position="1"/>
        <end position="430"/>
    </location>
</feature>
<feature type="short sequence motif" description="'HIGH' region">
    <location>
        <begin position="50"/>
        <end position="60"/>
    </location>
</feature>
<feature type="short sequence motif" description="'ERGGDP' region">
    <location>
        <begin position="192"/>
        <end position="197"/>
    </location>
</feature>
<feature type="short sequence motif" description="'KMSKS' region">
    <location>
        <begin position="294"/>
        <end position="298"/>
    </location>
</feature>
<feature type="binding site" evidence="1">
    <location>
        <begin position="48"/>
        <end position="51"/>
    </location>
    <ligand>
        <name>L-cysteinyl-5'-AMP</name>
        <dbReference type="ChEBI" id="CHEBI:144924"/>
    </ligand>
</feature>
<feature type="binding site" evidence="1">
    <location>
        <position position="48"/>
    </location>
    <ligand>
        <name>Zn(2+)</name>
        <dbReference type="ChEBI" id="CHEBI:29105"/>
    </ligand>
</feature>
<feature type="binding site" evidence="1">
    <location>
        <position position="63"/>
    </location>
    <ligand>
        <name>L-cysteinyl-5'-AMP</name>
        <dbReference type="ChEBI" id="CHEBI:144924"/>
    </ligand>
</feature>
<feature type="binding site" evidence="1">
    <location>
        <begin position="86"/>
        <end position="88"/>
    </location>
    <ligand>
        <name>L-cysteinyl-5'-AMP</name>
        <dbReference type="ChEBI" id="CHEBI:144924"/>
    </ligand>
</feature>
<feature type="binding site" evidence="1">
    <location>
        <position position="232"/>
    </location>
    <ligand>
        <name>L-cysteinyl-5'-AMP</name>
        <dbReference type="ChEBI" id="CHEBI:144924"/>
    </ligand>
</feature>
<feature type="binding site" evidence="1">
    <location>
        <position position="236"/>
    </location>
    <ligand>
        <name>Zn(2+)</name>
        <dbReference type="ChEBI" id="CHEBI:29105"/>
    </ligand>
</feature>
<feature type="binding site" evidence="1">
    <location>
        <begin position="254"/>
        <end position="256"/>
    </location>
    <ligand>
        <name>L-cysteinyl-5'-AMP</name>
        <dbReference type="ChEBI" id="CHEBI:144924"/>
    </ligand>
</feature>
<feature type="binding site" evidence="1">
    <location>
        <position position="261"/>
    </location>
    <ligand>
        <name>Zn(2+)</name>
        <dbReference type="ChEBI" id="CHEBI:29105"/>
    </ligand>
</feature>
<feature type="binding site" evidence="1">
    <location>
        <position position="288"/>
    </location>
    <ligand>
        <name>L-cysteinyl-5'-AMP</name>
        <dbReference type="ChEBI" id="CHEBI:144924"/>
    </ligand>
</feature>